<accession>P48162</accession>
<feature type="chain" id="PRO_0000129470" description="Large ribosomal subunit protein uL23A">
    <location>
        <begin position="1"/>
        <end position="147"/>
    </location>
</feature>
<feature type="region of interest" description="Disordered" evidence="2">
    <location>
        <begin position="1"/>
        <end position="29"/>
    </location>
</feature>
<feature type="compositionally biased region" description="Low complexity" evidence="2">
    <location>
        <begin position="1"/>
        <end position="10"/>
    </location>
</feature>
<feature type="compositionally biased region" description="Basic residues" evidence="2">
    <location>
        <begin position="18"/>
        <end position="29"/>
    </location>
</feature>
<dbReference type="EMBL" id="FO080828">
    <property type="protein sequence ID" value="CCD67088.1"/>
    <property type="molecule type" value="Genomic_DNA"/>
</dbReference>
<dbReference type="PIR" id="T16456">
    <property type="entry name" value="T16456"/>
</dbReference>
<dbReference type="RefSeq" id="NP_508808.1">
    <property type="nucleotide sequence ID" value="NM_076407.8"/>
</dbReference>
<dbReference type="SMR" id="P48162"/>
<dbReference type="BioGRID" id="45683">
    <property type="interactions" value="105"/>
</dbReference>
<dbReference type="DIP" id="DIP-24598N"/>
<dbReference type="FunCoup" id="P48162">
    <property type="interactions" value="1285"/>
</dbReference>
<dbReference type="IntAct" id="P48162">
    <property type="interactions" value="1"/>
</dbReference>
<dbReference type="STRING" id="6239.F55D10.2.1"/>
<dbReference type="PaxDb" id="6239-F55D10.2"/>
<dbReference type="PeptideAtlas" id="P48162"/>
<dbReference type="EnsemblMetazoa" id="F55D10.2.1">
    <property type="protein sequence ID" value="F55D10.2.1"/>
    <property type="gene ID" value="WBGene00004438"/>
</dbReference>
<dbReference type="GeneID" id="180748"/>
<dbReference type="KEGG" id="cel:CELE_F55D10.2"/>
<dbReference type="UCSC" id="F55D10.2.1">
    <property type="organism name" value="c. elegans"/>
</dbReference>
<dbReference type="AGR" id="WB:WBGene00004438"/>
<dbReference type="CTD" id="180748"/>
<dbReference type="WormBase" id="F55D10.2">
    <property type="protein sequence ID" value="CE02777"/>
    <property type="gene ID" value="WBGene00004438"/>
    <property type="gene designation" value="rpl-23A.1"/>
</dbReference>
<dbReference type="eggNOG" id="KOG1751">
    <property type="taxonomic scope" value="Eukaryota"/>
</dbReference>
<dbReference type="GeneTree" id="ENSGT00970000196251"/>
<dbReference type="HOGENOM" id="CLU_037562_0_2_1"/>
<dbReference type="InParanoid" id="P48162"/>
<dbReference type="OMA" id="FRIIRHP"/>
<dbReference type="OrthoDB" id="1267328at2759"/>
<dbReference type="PhylomeDB" id="P48162"/>
<dbReference type="PRO" id="PR:P48162"/>
<dbReference type="Proteomes" id="UP000001940">
    <property type="component" value="Chromosome X"/>
</dbReference>
<dbReference type="Bgee" id="WBGene00004438">
    <property type="expression patterns" value="Expressed in larva and 4 other cell types or tissues"/>
</dbReference>
<dbReference type="GO" id="GO:0022625">
    <property type="term" value="C:cytosolic large ribosomal subunit"/>
    <property type="evidence" value="ECO:0000318"/>
    <property type="project" value="GO_Central"/>
</dbReference>
<dbReference type="GO" id="GO:0019843">
    <property type="term" value="F:rRNA binding"/>
    <property type="evidence" value="ECO:0007669"/>
    <property type="project" value="UniProtKB-KW"/>
</dbReference>
<dbReference type="GO" id="GO:0003735">
    <property type="term" value="F:structural constituent of ribosome"/>
    <property type="evidence" value="ECO:0000318"/>
    <property type="project" value="GO_Central"/>
</dbReference>
<dbReference type="GO" id="GO:0006412">
    <property type="term" value="P:translation"/>
    <property type="evidence" value="ECO:0007669"/>
    <property type="project" value="InterPro"/>
</dbReference>
<dbReference type="FunFam" id="3.30.70.330:FF:000035">
    <property type="entry name" value="60S ribosomal protein L23a"/>
    <property type="match status" value="1"/>
</dbReference>
<dbReference type="Gene3D" id="3.30.70.330">
    <property type="match status" value="1"/>
</dbReference>
<dbReference type="HAMAP" id="MF_01369_A">
    <property type="entry name" value="Ribosomal_uL23_A"/>
    <property type="match status" value="1"/>
</dbReference>
<dbReference type="InterPro" id="IPR012677">
    <property type="entry name" value="Nucleotide-bd_a/b_plait_sf"/>
</dbReference>
<dbReference type="InterPro" id="IPR013025">
    <property type="entry name" value="Ribosomal_uL23-like"/>
</dbReference>
<dbReference type="InterPro" id="IPR012678">
    <property type="entry name" value="Ribosomal_uL23/eL15/eS24_sf"/>
</dbReference>
<dbReference type="InterPro" id="IPR001014">
    <property type="entry name" value="Ribosomal_uL23_CS"/>
</dbReference>
<dbReference type="InterPro" id="IPR005633">
    <property type="entry name" value="Ribosomal_uL23_N"/>
</dbReference>
<dbReference type="NCBIfam" id="NF011118">
    <property type="entry name" value="PRK14548.1"/>
    <property type="match status" value="1"/>
</dbReference>
<dbReference type="PANTHER" id="PTHR11620">
    <property type="entry name" value="60S RIBOSOMAL PROTEIN L23A"/>
    <property type="match status" value="1"/>
</dbReference>
<dbReference type="Pfam" id="PF00276">
    <property type="entry name" value="Ribosomal_L23"/>
    <property type="match status" value="1"/>
</dbReference>
<dbReference type="Pfam" id="PF03939">
    <property type="entry name" value="Ribosomal_L23eN"/>
    <property type="match status" value="1"/>
</dbReference>
<dbReference type="SUPFAM" id="SSF54189">
    <property type="entry name" value="Ribosomal proteins S24e, L23 and L15e"/>
    <property type="match status" value="1"/>
</dbReference>
<dbReference type="PROSITE" id="PS00050">
    <property type="entry name" value="RIBOSOMAL_L23"/>
    <property type="match status" value="1"/>
</dbReference>
<proteinExistence type="inferred from homology"/>
<keyword id="KW-1185">Reference proteome</keyword>
<keyword id="KW-0687">Ribonucleoprotein</keyword>
<keyword id="KW-0689">Ribosomal protein</keyword>
<keyword id="KW-0694">RNA-binding</keyword>
<keyword id="KW-0699">rRNA-binding</keyword>
<organism>
    <name type="scientific">Caenorhabditis elegans</name>
    <dbReference type="NCBI Taxonomy" id="6239"/>
    <lineage>
        <taxon>Eukaryota</taxon>
        <taxon>Metazoa</taxon>
        <taxon>Ecdysozoa</taxon>
        <taxon>Nematoda</taxon>
        <taxon>Chromadorea</taxon>
        <taxon>Rhabditida</taxon>
        <taxon>Rhabditina</taxon>
        <taxon>Rhabditomorpha</taxon>
        <taxon>Rhabditoidea</taxon>
        <taxon>Rhabditidae</taxon>
        <taxon>Peloderinae</taxon>
        <taxon>Caenorhabditis</taxon>
    </lineage>
</organism>
<sequence length="147" mass="16697">MAPSAPAKTAKALDAKKKVVKGKRTTHRRQVRTSVHFRRPVTLKTARQARFPRKSAPKTSKMDHFRIIQHPLTTESAMKKIEEHNTLVFIVSNDANKYQIKDAVHKLYNVQALKVNTLITPLQQKKAYVRLTADYDALDVANKIGVI</sequence>
<protein>
    <recommendedName>
        <fullName evidence="3">Large ribosomal subunit protein uL23A</fullName>
    </recommendedName>
    <alternativeName>
        <fullName>60S ribosomal protein L23a 1</fullName>
    </alternativeName>
</protein>
<reference key="1">
    <citation type="journal article" date="1998" name="Science">
        <title>Genome sequence of the nematode C. elegans: a platform for investigating biology.</title>
        <authorList>
            <consortium name="The C. elegans sequencing consortium"/>
        </authorList>
    </citation>
    <scope>NUCLEOTIDE SEQUENCE [LARGE SCALE GENOMIC DNA]</scope>
    <source>
        <strain>Bristol N2</strain>
    </source>
</reference>
<name>R23A1_CAEEL</name>
<gene>
    <name evidence="4" type="primary">rpl-23A.1</name>
    <name evidence="4" type="ORF">F55D10.2</name>
</gene>
<comment type="function">
    <text evidence="1">This protein binds to a specific region on the 26S rRNA.</text>
</comment>
<comment type="similarity">
    <text evidence="3">Belongs to the universal ribosomal protein uL23 family.</text>
</comment>
<evidence type="ECO:0000250" key="1"/>
<evidence type="ECO:0000256" key="2">
    <source>
        <dbReference type="SAM" id="MobiDB-lite"/>
    </source>
</evidence>
<evidence type="ECO:0000305" key="3"/>
<evidence type="ECO:0000312" key="4">
    <source>
        <dbReference type="WormBase" id="F55D10.2"/>
    </source>
</evidence>